<proteinExistence type="inferred from homology"/>
<organism>
    <name type="scientific">Opitutus terrae (strain DSM 11246 / JCM 15787 / PB90-1)</name>
    <dbReference type="NCBI Taxonomy" id="452637"/>
    <lineage>
        <taxon>Bacteria</taxon>
        <taxon>Pseudomonadati</taxon>
        <taxon>Verrucomicrobiota</taxon>
        <taxon>Opitutia</taxon>
        <taxon>Opitutales</taxon>
        <taxon>Opitutaceae</taxon>
        <taxon>Opitutus</taxon>
    </lineage>
</organism>
<comment type="function">
    <text evidence="1">Catalyzes the methyl esterification of L-isoaspartyl residues in peptides and proteins that result from spontaneous decomposition of normal L-aspartyl and L-asparaginyl residues. It plays a role in the repair and/or degradation of damaged proteins.</text>
</comment>
<comment type="catalytic activity">
    <reaction evidence="1">
        <text>[protein]-L-isoaspartate + S-adenosyl-L-methionine = [protein]-L-isoaspartate alpha-methyl ester + S-adenosyl-L-homocysteine</text>
        <dbReference type="Rhea" id="RHEA:12705"/>
        <dbReference type="Rhea" id="RHEA-COMP:12143"/>
        <dbReference type="Rhea" id="RHEA-COMP:12144"/>
        <dbReference type="ChEBI" id="CHEBI:57856"/>
        <dbReference type="ChEBI" id="CHEBI:59789"/>
        <dbReference type="ChEBI" id="CHEBI:90596"/>
        <dbReference type="ChEBI" id="CHEBI:90598"/>
        <dbReference type="EC" id="2.1.1.77"/>
    </reaction>
</comment>
<comment type="subcellular location">
    <subcellularLocation>
        <location evidence="1">Cytoplasm</location>
    </subcellularLocation>
</comment>
<comment type="similarity">
    <text evidence="1">Belongs to the methyltransferase superfamily. L-isoaspartyl/D-aspartyl protein methyltransferase family.</text>
</comment>
<feature type="chain" id="PRO_0000351892" description="Protein-L-isoaspartate O-methyltransferase">
    <location>
        <begin position="1"/>
        <end position="233"/>
    </location>
</feature>
<feature type="active site" evidence="1">
    <location>
        <position position="83"/>
    </location>
</feature>
<dbReference type="EC" id="2.1.1.77" evidence="1"/>
<dbReference type="EMBL" id="CP001032">
    <property type="protein sequence ID" value="ACB73555.1"/>
    <property type="molecule type" value="Genomic_DNA"/>
</dbReference>
<dbReference type="RefSeq" id="WP_012373093.1">
    <property type="nucleotide sequence ID" value="NC_010571.1"/>
</dbReference>
<dbReference type="SMR" id="B1ZPF0"/>
<dbReference type="STRING" id="452637.Oter_0265"/>
<dbReference type="KEGG" id="ote:Oter_0265"/>
<dbReference type="eggNOG" id="COG2518">
    <property type="taxonomic scope" value="Bacteria"/>
</dbReference>
<dbReference type="HOGENOM" id="CLU_055432_2_0_0"/>
<dbReference type="OrthoDB" id="9772751at2"/>
<dbReference type="Proteomes" id="UP000007013">
    <property type="component" value="Chromosome"/>
</dbReference>
<dbReference type="GO" id="GO:0005737">
    <property type="term" value="C:cytoplasm"/>
    <property type="evidence" value="ECO:0007669"/>
    <property type="project" value="UniProtKB-SubCell"/>
</dbReference>
<dbReference type="GO" id="GO:0004719">
    <property type="term" value="F:protein-L-isoaspartate (D-aspartate) O-methyltransferase activity"/>
    <property type="evidence" value="ECO:0007669"/>
    <property type="project" value="UniProtKB-UniRule"/>
</dbReference>
<dbReference type="GO" id="GO:0032259">
    <property type="term" value="P:methylation"/>
    <property type="evidence" value="ECO:0007669"/>
    <property type="project" value="UniProtKB-KW"/>
</dbReference>
<dbReference type="GO" id="GO:0036211">
    <property type="term" value="P:protein modification process"/>
    <property type="evidence" value="ECO:0007669"/>
    <property type="project" value="UniProtKB-UniRule"/>
</dbReference>
<dbReference type="GO" id="GO:0030091">
    <property type="term" value="P:protein repair"/>
    <property type="evidence" value="ECO:0007669"/>
    <property type="project" value="UniProtKB-UniRule"/>
</dbReference>
<dbReference type="CDD" id="cd02440">
    <property type="entry name" value="AdoMet_MTases"/>
    <property type="match status" value="1"/>
</dbReference>
<dbReference type="FunFam" id="3.40.50.150:FF:000010">
    <property type="entry name" value="Protein-L-isoaspartate O-methyltransferase"/>
    <property type="match status" value="1"/>
</dbReference>
<dbReference type="Gene3D" id="3.40.50.150">
    <property type="entry name" value="Vaccinia Virus protein VP39"/>
    <property type="match status" value="1"/>
</dbReference>
<dbReference type="HAMAP" id="MF_00090">
    <property type="entry name" value="PIMT"/>
    <property type="match status" value="1"/>
</dbReference>
<dbReference type="InterPro" id="IPR000682">
    <property type="entry name" value="PCMT"/>
</dbReference>
<dbReference type="InterPro" id="IPR029063">
    <property type="entry name" value="SAM-dependent_MTases_sf"/>
</dbReference>
<dbReference type="NCBIfam" id="TIGR00080">
    <property type="entry name" value="pimt"/>
    <property type="match status" value="1"/>
</dbReference>
<dbReference type="NCBIfam" id="NF001453">
    <property type="entry name" value="PRK00312.1"/>
    <property type="match status" value="1"/>
</dbReference>
<dbReference type="PANTHER" id="PTHR11579">
    <property type="entry name" value="PROTEIN-L-ISOASPARTATE O-METHYLTRANSFERASE"/>
    <property type="match status" value="1"/>
</dbReference>
<dbReference type="PANTHER" id="PTHR11579:SF0">
    <property type="entry name" value="PROTEIN-L-ISOASPARTATE(D-ASPARTATE) O-METHYLTRANSFERASE"/>
    <property type="match status" value="1"/>
</dbReference>
<dbReference type="Pfam" id="PF01135">
    <property type="entry name" value="PCMT"/>
    <property type="match status" value="1"/>
</dbReference>
<dbReference type="SUPFAM" id="SSF53335">
    <property type="entry name" value="S-adenosyl-L-methionine-dependent methyltransferases"/>
    <property type="match status" value="1"/>
</dbReference>
<dbReference type="PROSITE" id="PS01279">
    <property type="entry name" value="PCMT"/>
    <property type="match status" value="1"/>
</dbReference>
<evidence type="ECO:0000255" key="1">
    <source>
        <dbReference type="HAMAP-Rule" id="MF_00090"/>
    </source>
</evidence>
<keyword id="KW-0963">Cytoplasm</keyword>
<keyword id="KW-0489">Methyltransferase</keyword>
<keyword id="KW-1185">Reference proteome</keyword>
<keyword id="KW-0949">S-adenosyl-L-methionine</keyword>
<keyword id="KW-0808">Transferase</keyword>
<gene>
    <name evidence="1" type="primary">pcm</name>
    <name type="ordered locus">Oter_0265</name>
</gene>
<protein>
    <recommendedName>
        <fullName evidence="1">Protein-L-isoaspartate O-methyltransferase</fullName>
        <ecNumber evidence="1">2.1.1.77</ecNumber>
    </recommendedName>
    <alternativeName>
        <fullName evidence="1">L-isoaspartyl protein carboxyl methyltransferase</fullName>
    </alternativeName>
    <alternativeName>
        <fullName evidence="1">Protein L-isoaspartyl methyltransferase</fullName>
    </alternativeName>
    <alternativeName>
        <fullName evidence="1">Protein-beta-aspartate methyltransferase</fullName>
        <shortName evidence="1">PIMT</shortName>
    </alternativeName>
</protein>
<sequence>MRARLSLLALLLIVGTAHAAYERARTNEREHMVEEQLISRDITDEATLAAMRTVPRHRFVPEDVRRSAYDDNPLPIGHGQTISQPYIVAYMTQAARLKRDSRVLEIGTGSGYQAAVLAELCDEVYSIEIVEPLAHQAAATLKETGYERVHLRIGDGYNGWPEAAPFDAILVTAGAEDVPPKLFEQLKEGGRLVIPVGPAHSTQFLKLVTKRNGKPHLHTLMPVRFVPFTREKP</sequence>
<name>PIMT_OPITP</name>
<accession>B1ZPF0</accession>
<reference key="1">
    <citation type="journal article" date="2011" name="J. Bacteriol.">
        <title>Genome sequence of the verrucomicrobium Opitutus terrae PB90-1, an abundant inhabitant of rice paddy soil ecosystems.</title>
        <authorList>
            <person name="van Passel M.W."/>
            <person name="Kant R."/>
            <person name="Palva A."/>
            <person name="Copeland A."/>
            <person name="Lucas S."/>
            <person name="Lapidus A."/>
            <person name="Glavina del Rio T."/>
            <person name="Pitluck S."/>
            <person name="Goltsman E."/>
            <person name="Clum A."/>
            <person name="Sun H."/>
            <person name="Schmutz J."/>
            <person name="Larimer F.W."/>
            <person name="Land M.L."/>
            <person name="Hauser L."/>
            <person name="Kyrpides N."/>
            <person name="Mikhailova N."/>
            <person name="Richardson P.P."/>
            <person name="Janssen P.H."/>
            <person name="de Vos W.M."/>
            <person name="Smidt H."/>
        </authorList>
    </citation>
    <scope>NUCLEOTIDE SEQUENCE [LARGE SCALE GENOMIC DNA]</scope>
    <source>
        <strain>DSM 11246 / JCM 15787 / PB90-1</strain>
    </source>
</reference>